<organism>
    <name type="scientific">Orthochirus scrobiculosus</name>
    <name type="common">Central Asian scorpion</name>
    <dbReference type="NCBI Taxonomy" id="6892"/>
    <lineage>
        <taxon>Eukaryota</taxon>
        <taxon>Metazoa</taxon>
        <taxon>Ecdysozoa</taxon>
        <taxon>Arthropoda</taxon>
        <taxon>Chelicerata</taxon>
        <taxon>Arachnida</taxon>
        <taxon>Scorpiones</taxon>
        <taxon>Buthida</taxon>
        <taxon>Buthoidea</taxon>
        <taxon>Buthidae</taxon>
        <taxon>Orthochirus</taxon>
    </lineage>
</organism>
<proteinExistence type="evidence at protein level"/>
<accession>O76963</accession>
<protein>
    <recommendedName>
        <fullName>Insect toxin OsI1</fullName>
    </recommendedName>
    <alternativeName>
        <fullName>Insecticidal toxin OsI-1</fullName>
    </alternativeName>
</protein>
<dbReference type="EMBL" id="AJ006866">
    <property type="protein sequence ID" value="CAA07277.1"/>
    <property type="molecule type" value="mRNA"/>
</dbReference>
<dbReference type="SMR" id="O76963"/>
<dbReference type="GO" id="GO:0005576">
    <property type="term" value="C:extracellular region"/>
    <property type="evidence" value="ECO:0007669"/>
    <property type="project" value="UniProtKB-SubCell"/>
</dbReference>
<dbReference type="GO" id="GO:0019871">
    <property type="term" value="F:sodium channel inhibitor activity"/>
    <property type="evidence" value="ECO:0007669"/>
    <property type="project" value="InterPro"/>
</dbReference>
<dbReference type="GO" id="GO:0090729">
    <property type="term" value="F:toxin activity"/>
    <property type="evidence" value="ECO:0007669"/>
    <property type="project" value="UniProtKB-KW"/>
</dbReference>
<dbReference type="GO" id="GO:0006952">
    <property type="term" value="P:defense response"/>
    <property type="evidence" value="ECO:0007669"/>
    <property type="project" value="InterPro"/>
</dbReference>
<dbReference type="CDD" id="cd23106">
    <property type="entry name" value="neurotoxins_LC_scorpion"/>
    <property type="match status" value="1"/>
</dbReference>
<dbReference type="FunFam" id="3.30.30.10:FF:000002">
    <property type="entry name" value="Alpha-like toxin BmK-M1"/>
    <property type="match status" value="1"/>
</dbReference>
<dbReference type="Gene3D" id="3.30.30.10">
    <property type="entry name" value="Knottin, scorpion toxin-like"/>
    <property type="match status" value="1"/>
</dbReference>
<dbReference type="InterPro" id="IPR044062">
    <property type="entry name" value="LCN-type_CS_alpha_beta_dom"/>
</dbReference>
<dbReference type="InterPro" id="IPR003614">
    <property type="entry name" value="Scorpion_toxin-like"/>
</dbReference>
<dbReference type="InterPro" id="IPR036574">
    <property type="entry name" value="Scorpion_toxin-like_sf"/>
</dbReference>
<dbReference type="InterPro" id="IPR018218">
    <property type="entry name" value="Scorpion_toxinL"/>
</dbReference>
<dbReference type="InterPro" id="IPR002061">
    <property type="entry name" value="Scorpion_toxinL/defensin"/>
</dbReference>
<dbReference type="Pfam" id="PF00537">
    <property type="entry name" value="Toxin_3"/>
    <property type="match status" value="1"/>
</dbReference>
<dbReference type="PRINTS" id="PR00285">
    <property type="entry name" value="SCORPNTOXIN"/>
</dbReference>
<dbReference type="SMART" id="SM00505">
    <property type="entry name" value="Knot1"/>
    <property type="match status" value="1"/>
</dbReference>
<dbReference type="SUPFAM" id="SSF57095">
    <property type="entry name" value="Scorpion toxin-like"/>
    <property type="match status" value="1"/>
</dbReference>
<dbReference type="PROSITE" id="PS51863">
    <property type="entry name" value="LCN_CSAB"/>
    <property type="match status" value="1"/>
</dbReference>
<name>SIXI_ORTSC</name>
<reference key="1">
    <citation type="journal article" date="2000" name="Toxicon">
        <title>Purification and cDNA cloning of an insecticidal protein from the venom of the scorpion Orthochirus scrobiculosus.</title>
        <authorList>
            <person name="Kozlov S.A."/>
            <person name="Lipkin A.V."/>
            <person name="Nosyreva E.D."/>
            <person name="Blake A."/>
            <person name="Windass J.J.D."/>
            <person name="Grishin E.V."/>
        </authorList>
    </citation>
    <scope>NUCLEOTIDE SEQUENCE [MRNA]</scope>
    <scope>PROTEIN SEQUENCE OF 1-17</scope>
    <scope>AMIDATION AT GLY-61</scope>
    <scope>TOXIC DOSE</scope>
    <scope>MASS SPECTROMETRY</scope>
    <source>
        <tissue>Venom</tissue>
        <tissue>Venom gland</tissue>
    </source>
</reference>
<keyword id="KW-0027">Amidation</keyword>
<keyword id="KW-0903">Direct protein sequencing</keyword>
<keyword id="KW-1015">Disulfide bond</keyword>
<keyword id="KW-0872">Ion channel impairing toxin</keyword>
<keyword id="KW-0528">Neurotoxin</keyword>
<keyword id="KW-0964">Secreted</keyword>
<keyword id="KW-0800">Toxin</keyword>
<keyword id="KW-0738">Voltage-gated sodium channel impairing toxin</keyword>
<evidence type="ECO:0000255" key="1">
    <source>
        <dbReference type="PROSITE-ProRule" id="PRU01210"/>
    </source>
</evidence>
<evidence type="ECO:0000269" key="2">
    <source>
    </source>
</evidence>
<evidence type="ECO:0000305" key="3"/>
<comment type="function">
    <text>Depressant insect beta-toxins cause a transient contraction paralysis followed by a slow flaccid paralysis. They bind voltage-independently at site-4 of sodium channels (Nav) and shift the voltage of activation toward more negative potentials thereby affecting sodium channel activation and promoting spontaneous and repetitive firing. This toxin is active only on insects.</text>
</comment>
<comment type="subcellular location">
    <subcellularLocation>
        <location>Secreted</location>
    </subcellularLocation>
</comment>
<comment type="tissue specificity">
    <text>Expressed by the venom gland.</text>
</comment>
<comment type="domain">
    <text evidence="3">Has the structural arrangement of an alpha-helix connected to antiparallel beta-sheets by disulfide bonds (CS-alpha/beta).</text>
</comment>
<comment type="mass spectrometry"/>
<comment type="toxic dose">
    <text evidence="2">PD(50) is 12 mg/kg when injected into tobacco budworm larvae (H.virescens).</text>
</comment>
<comment type="similarity">
    <text evidence="3">Belongs to the long (4 C-C) scorpion toxin superfamily. Sodium channel inhibitor family. Beta subfamily.</text>
</comment>
<feature type="chain" id="PRO_0000035297" description="Insect toxin OsI1">
    <location>
        <begin position="1"/>
        <end position="61"/>
    </location>
</feature>
<feature type="domain" description="LCN-type CS-alpha/beta" evidence="1">
    <location>
        <begin position="1"/>
        <end position="61"/>
    </location>
</feature>
<feature type="modified residue" description="Glycine amide" evidence="2">
    <location>
        <position position="61"/>
    </location>
</feature>
<feature type="disulfide bond" evidence="1">
    <location>
        <begin position="10"/>
        <end position="60"/>
    </location>
</feature>
<feature type="disulfide bond" evidence="1">
    <location>
        <begin position="14"/>
        <end position="35"/>
    </location>
</feature>
<feature type="disulfide bond" evidence="1">
    <location>
        <begin position="21"/>
        <end position="42"/>
    </location>
</feature>
<feature type="disulfide bond" evidence="1">
    <location>
        <begin position="25"/>
        <end position="44"/>
    </location>
</feature>
<sequence>DGYPKQKDGCKYSCTINHKFCNSVCKSNGGDYGYCWFWGLACWCEGLPDNKMWKYETNTCGGKK</sequence>